<reference key="1">
    <citation type="journal article" date="2005" name="Nucleic Acids Res.">
        <title>Genome dynamics and diversity of Shigella species, the etiologic agents of bacillary dysentery.</title>
        <authorList>
            <person name="Yang F."/>
            <person name="Yang J."/>
            <person name="Zhang X."/>
            <person name="Chen L."/>
            <person name="Jiang Y."/>
            <person name="Yan Y."/>
            <person name="Tang X."/>
            <person name="Wang J."/>
            <person name="Xiong Z."/>
            <person name="Dong J."/>
            <person name="Xue Y."/>
            <person name="Zhu Y."/>
            <person name="Xu X."/>
            <person name="Sun L."/>
            <person name="Chen S."/>
            <person name="Nie H."/>
            <person name="Peng J."/>
            <person name="Xu J."/>
            <person name="Wang Y."/>
            <person name="Yuan Z."/>
            <person name="Wen Y."/>
            <person name="Yao Z."/>
            <person name="Shen Y."/>
            <person name="Qiang B."/>
            <person name="Hou Y."/>
            <person name="Yu J."/>
            <person name="Jin Q."/>
        </authorList>
    </citation>
    <scope>NUCLEOTIDE SEQUENCE [LARGE SCALE GENOMIC DNA]</scope>
    <source>
        <strain>Ss046</strain>
    </source>
</reference>
<proteinExistence type="inferred from homology"/>
<protein>
    <recommendedName>
        <fullName evidence="1">Pyridoxine 5'-phosphate synthase</fullName>
        <shortName evidence="1">PNP synthase</shortName>
        <ecNumber evidence="1">2.6.99.2</ecNumber>
    </recommendedName>
</protein>
<organism>
    <name type="scientific">Shigella sonnei (strain Ss046)</name>
    <dbReference type="NCBI Taxonomy" id="300269"/>
    <lineage>
        <taxon>Bacteria</taxon>
        <taxon>Pseudomonadati</taxon>
        <taxon>Pseudomonadota</taxon>
        <taxon>Gammaproteobacteria</taxon>
        <taxon>Enterobacterales</taxon>
        <taxon>Enterobacteriaceae</taxon>
        <taxon>Shigella</taxon>
    </lineage>
</organism>
<keyword id="KW-0963">Cytoplasm</keyword>
<keyword id="KW-0664">Pyridoxine biosynthesis</keyword>
<keyword id="KW-1185">Reference proteome</keyword>
<keyword id="KW-0808">Transferase</keyword>
<gene>
    <name evidence="1" type="primary">pdxJ</name>
    <name type="ordered locus">SSON_2688</name>
</gene>
<comment type="function">
    <text evidence="1">Catalyzes the complicated ring closure reaction between the two acyclic compounds 1-deoxy-D-xylulose-5-phosphate (DXP) and 3-amino-2-oxopropyl phosphate (1-amino-acetone-3-phosphate or AAP) to form pyridoxine 5'-phosphate (PNP) and inorganic phosphate.</text>
</comment>
<comment type="catalytic activity">
    <reaction evidence="1">
        <text>3-amino-2-oxopropyl phosphate + 1-deoxy-D-xylulose 5-phosphate = pyridoxine 5'-phosphate + phosphate + 2 H2O + H(+)</text>
        <dbReference type="Rhea" id="RHEA:15265"/>
        <dbReference type="ChEBI" id="CHEBI:15377"/>
        <dbReference type="ChEBI" id="CHEBI:15378"/>
        <dbReference type="ChEBI" id="CHEBI:43474"/>
        <dbReference type="ChEBI" id="CHEBI:57279"/>
        <dbReference type="ChEBI" id="CHEBI:57792"/>
        <dbReference type="ChEBI" id="CHEBI:58589"/>
        <dbReference type="EC" id="2.6.99.2"/>
    </reaction>
</comment>
<comment type="pathway">
    <text evidence="1">Cofactor biosynthesis; pyridoxine 5'-phosphate biosynthesis; pyridoxine 5'-phosphate from D-erythrose 4-phosphate: step 5/5.</text>
</comment>
<comment type="subunit">
    <text evidence="1">Homooctamer; tetramer of dimers.</text>
</comment>
<comment type="subcellular location">
    <subcellularLocation>
        <location evidence="1">Cytoplasm</location>
    </subcellularLocation>
</comment>
<comment type="similarity">
    <text evidence="1">Belongs to the PNP synthase family.</text>
</comment>
<feature type="chain" id="PRO_0000231847" description="Pyridoxine 5'-phosphate synthase">
    <location>
        <begin position="1"/>
        <end position="243"/>
    </location>
</feature>
<feature type="active site" description="Proton acceptor" evidence="1">
    <location>
        <position position="45"/>
    </location>
</feature>
<feature type="active site" description="Proton acceptor" evidence="1">
    <location>
        <position position="72"/>
    </location>
</feature>
<feature type="active site" description="Proton donor" evidence="1">
    <location>
        <position position="193"/>
    </location>
</feature>
<feature type="binding site" evidence="1">
    <location>
        <position position="9"/>
    </location>
    <ligand>
        <name>3-amino-2-oxopropyl phosphate</name>
        <dbReference type="ChEBI" id="CHEBI:57279"/>
    </ligand>
</feature>
<feature type="binding site" evidence="1">
    <location>
        <begin position="11"/>
        <end position="12"/>
    </location>
    <ligand>
        <name>1-deoxy-D-xylulose 5-phosphate</name>
        <dbReference type="ChEBI" id="CHEBI:57792"/>
    </ligand>
</feature>
<feature type="binding site" evidence="1">
    <location>
        <position position="20"/>
    </location>
    <ligand>
        <name>3-amino-2-oxopropyl phosphate</name>
        <dbReference type="ChEBI" id="CHEBI:57279"/>
    </ligand>
</feature>
<feature type="binding site" evidence="1">
    <location>
        <position position="47"/>
    </location>
    <ligand>
        <name>1-deoxy-D-xylulose 5-phosphate</name>
        <dbReference type="ChEBI" id="CHEBI:57792"/>
    </ligand>
</feature>
<feature type="binding site" evidence="1">
    <location>
        <position position="52"/>
    </location>
    <ligand>
        <name>1-deoxy-D-xylulose 5-phosphate</name>
        <dbReference type="ChEBI" id="CHEBI:57792"/>
    </ligand>
</feature>
<feature type="binding site" evidence="1">
    <location>
        <position position="102"/>
    </location>
    <ligand>
        <name>1-deoxy-D-xylulose 5-phosphate</name>
        <dbReference type="ChEBI" id="CHEBI:57792"/>
    </ligand>
</feature>
<feature type="binding site" evidence="1">
    <location>
        <position position="194"/>
    </location>
    <ligand>
        <name>3-amino-2-oxopropyl phosphate</name>
        <dbReference type="ChEBI" id="CHEBI:57279"/>
    </ligand>
</feature>
<feature type="binding site" evidence="1">
    <location>
        <begin position="215"/>
        <end position="216"/>
    </location>
    <ligand>
        <name>3-amino-2-oxopropyl phosphate</name>
        <dbReference type="ChEBI" id="CHEBI:57279"/>
    </ligand>
</feature>
<feature type="site" description="Transition state stabilizer" evidence="1">
    <location>
        <position position="153"/>
    </location>
</feature>
<dbReference type="EC" id="2.6.99.2" evidence="1"/>
<dbReference type="EMBL" id="CP000038">
    <property type="protein sequence ID" value="AAZ89310.1"/>
    <property type="molecule type" value="Genomic_DNA"/>
</dbReference>
<dbReference type="RefSeq" id="WP_005137304.1">
    <property type="nucleotide sequence ID" value="NC_007384.1"/>
</dbReference>
<dbReference type="SMR" id="Q3YYV2"/>
<dbReference type="GeneID" id="93774527"/>
<dbReference type="KEGG" id="ssn:SSON_2688"/>
<dbReference type="HOGENOM" id="CLU_074563_0_0_6"/>
<dbReference type="UniPathway" id="UPA00244">
    <property type="reaction ID" value="UER00313"/>
</dbReference>
<dbReference type="Proteomes" id="UP000002529">
    <property type="component" value="Chromosome"/>
</dbReference>
<dbReference type="GO" id="GO:0005829">
    <property type="term" value="C:cytosol"/>
    <property type="evidence" value="ECO:0007669"/>
    <property type="project" value="TreeGrafter"/>
</dbReference>
<dbReference type="GO" id="GO:0033856">
    <property type="term" value="F:pyridoxine 5'-phosphate synthase activity"/>
    <property type="evidence" value="ECO:0007669"/>
    <property type="project" value="UniProtKB-EC"/>
</dbReference>
<dbReference type="GO" id="GO:0008615">
    <property type="term" value="P:pyridoxine biosynthetic process"/>
    <property type="evidence" value="ECO:0007669"/>
    <property type="project" value="UniProtKB-UniRule"/>
</dbReference>
<dbReference type="CDD" id="cd00003">
    <property type="entry name" value="PNPsynthase"/>
    <property type="match status" value="1"/>
</dbReference>
<dbReference type="FunFam" id="3.20.20.70:FF:000042">
    <property type="entry name" value="Pyridoxine 5'-phosphate synthase"/>
    <property type="match status" value="1"/>
</dbReference>
<dbReference type="Gene3D" id="3.20.20.70">
    <property type="entry name" value="Aldolase class I"/>
    <property type="match status" value="1"/>
</dbReference>
<dbReference type="HAMAP" id="MF_00279">
    <property type="entry name" value="PdxJ"/>
    <property type="match status" value="1"/>
</dbReference>
<dbReference type="InterPro" id="IPR013785">
    <property type="entry name" value="Aldolase_TIM"/>
</dbReference>
<dbReference type="InterPro" id="IPR004569">
    <property type="entry name" value="PyrdxlP_synth_PdxJ"/>
</dbReference>
<dbReference type="InterPro" id="IPR036130">
    <property type="entry name" value="Pyridoxine-5'_phos_synth"/>
</dbReference>
<dbReference type="NCBIfam" id="TIGR00559">
    <property type="entry name" value="pdxJ"/>
    <property type="match status" value="1"/>
</dbReference>
<dbReference type="NCBIfam" id="NF003623">
    <property type="entry name" value="PRK05265.1-1"/>
    <property type="match status" value="1"/>
</dbReference>
<dbReference type="NCBIfam" id="NF003624">
    <property type="entry name" value="PRK05265.1-2"/>
    <property type="match status" value="1"/>
</dbReference>
<dbReference type="NCBIfam" id="NF003625">
    <property type="entry name" value="PRK05265.1-3"/>
    <property type="match status" value="1"/>
</dbReference>
<dbReference type="NCBIfam" id="NF003626">
    <property type="entry name" value="PRK05265.1-4"/>
    <property type="match status" value="1"/>
</dbReference>
<dbReference type="NCBIfam" id="NF003627">
    <property type="entry name" value="PRK05265.1-5"/>
    <property type="match status" value="1"/>
</dbReference>
<dbReference type="PANTHER" id="PTHR30456">
    <property type="entry name" value="PYRIDOXINE 5'-PHOSPHATE SYNTHASE"/>
    <property type="match status" value="1"/>
</dbReference>
<dbReference type="PANTHER" id="PTHR30456:SF0">
    <property type="entry name" value="PYRIDOXINE 5'-PHOSPHATE SYNTHASE"/>
    <property type="match status" value="1"/>
</dbReference>
<dbReference type="Pfam" id="PF03740">
    <property type="entry name" value="PdxJ"/>
    <property type="match status" value="1"/>
</dbReference>
<dbReference type="SUPFAM" id="SSF63892">
    <property type="entry name" value="Pyridoxine 5'-phosphate synthase"/>
    <property type="match status" value="1"/>
</dbReference>
<name>PDXJ_SHISS</name>
<evidence type="ECO:0000255" key="1">
    <source>
        <dbReference type="HAMAP-Rule" id="MF_00279"/>
    </source>
</evidence>
<sequence>MAELLLGVNIDHIATLRNARGTAYPDPVQAAFIAEQAGADGITVHLREDRRHITDRDVRILRQTLDTRMNLEMAVTEEMLAIAVETKPHFCCLVPEKRQEVTTEGGLDVAGQREKMRDACKRLTDAGIQISLFIDADEEQIKAAAEVGAPFIEIHTGCYADAKTDAEQAQELVRIAKAATFAASLGLKVNAGHGLTYHNVKAIAAIPEMHELNIGHAIIGRAVMTGLKDAVAEMKRLMLEARG</sequence>
<accession>Q3YYV2</accession>